<gene>
    <name type="primary">NDUFA12</name>
    <name type="synonym">DAP13</name>
</gene>
<evidence type="ECO:0000255" key="1"/>
<evidence type="ECO:0000269" key="2">
    <source>
    </source>
</evidence>
<evidence type="ECO:0000269" key="3">
    <source>
    </source>
</evidence>
<evidence type="ECO:0000269" key="4">
    <source>
    </source>
</evidence>
<evidence type="ECO:0000269" key="5">
    <source>
    </source>
</evidence>
<evidence type="ECO:0000269" key="6">
    <source ref="3"/>
</evidence>
<evidence type="ECO:0000305" key="7"/>
<evidence type="ECO:0000305" key="8">
    <source>
    </source>
</evidence>
<evidence type="ECO:0007744" key="9">
    <source>
    </source>
</evidence>
<evidence type="ECO:0007744" key="10">
    <source>
    </source>
</evidence>
<evidence type="ECO:0007829" key="11">
    <source>
        <dbReference type="PDB" id="5XTB"/>
    </source>
</evidence>
<keyword id="KW-0002">3D-structure</keyword>
<keyword id="KW-0007">Acetylation</keyword>
<keyword id="KW-0025">Alternative splicing</keyword>
<keyword id="KW-0225">Disease variant</keyword>
<keyword id="KW-0249">Electron transport</keyword>
<keyword id="KW-0472">Membrane</keyword>
<keyword id="KW-0496">Mitochondrion</keyword>
<keyword id="KW-0999">Mitochondrion inner membrane</keyword>
<keyword id="KW-1274">Primary mitochondrial disease</keyword>
<keyword id="KW-1267">Proteomics identification</keyword>
<keyword id="KW-1185">Reference proteome</keyword>
<keyword id="KW-0679">Respiratory chain</keyword>
<keyword id="KW-0813">Transport</keyword>
<dbReference type="EMBL" id="AF217092">
    <property type="protein sequence ID" value="AAF91224.1"/>
    <property type="molecule type" value="mRNA"/>
</dbReference>
<dbReference type="EMBL" id="AF112208">
    <property type="protein sequence ID" value="AAF17196.1"/>
    <property type="molecule type" value="mRNA"/>
</dbReference>
<dbReference type="EMBL" id="BT007220">
    <property type="protein sequence ID" value="AAP35884.1"/>
    <property type="molecule type" value="mRNA"/>
</dbReference>
<dbReference type="EMBL" id="AC011598">
    <property type="status" value="NOT_ANNOTATED_CDS"/>
    <property type="molecule type" value="Genomic_DNA"/>
</dbReference>
<dbReference type="EMBL" id="AC132009">
    <property type="status" value="NOT_ANNOTATED_CDS"/>
    <property type="molecule type" value="Genomic_DNA"/>
</dbReference>
<dbReference type="EMBL" id="BC005936">
    <property type="protein sequence ID" value="AAH05936.1"/>
    <property type="molecule type" value="mRNA"/>
</dbReference>
<dbReference type="CCDS" id="CCDS58263.1">
    <molecule id="Q9UI09-2"/>
</dbReference>
<dbReference type="CCDS" id="CCDS9050.1">
    <molecule id="Q9UI09-1"/>
</dbReference>
<dbReference type="RefSeq" id="NP_001245267.1">
    <molecule id="Q9UI09-2"/>
    <property type="nucleotide sequence ID" value="NM_001258338.2"/>
</dbReference>
<dbReference type="RefSeq" id="NP_061326.1">
    <molecule id="Q9UI09-1"/>
    <property type="nucleotide sequence ID" value="NM_018838.5"/>
</dbReference>
<dbReference type="PDB" id="5XTB">
    <property type="method" value="EM"/>
    <property type="resolution" value="3.40 A"/>
    <property type="chains" value="N=2-144"/>
</dbReference>
<dbReference type="PDB" id="5XTD">
    <property type="method" value="EM"/>
    <property type="resolution" value="3.70 A"/>
    <property type="chains" value="N=2-144"/>
</dbReference>
<dbReference type="PDB" id="5XTH">
    <property type="method" value="EM"/>
    <property type="resolution" value="3.90 A"/>
    <property type="chains" value="N=2-144"/>
</dbReference>
<dbReference type="PDB" id="5XTI">
    <property type="method" value="EM"/>
    <property type="resolution" value="17.40 A"/>
    <property type="chains" value="BN/N=2-144"/>
</dbReference>
<dbReference type="PDBsum" id="5XTB"/>
<dbReference type="PDBsum" id="5XTD"/>
<dbReference type="PDBsum" id="5XTH"/>
<dbReference type="PDBsum" id="5XTI"/>
<dbReference type="SMR" id="Q9UI09"/>
<dbReference type="BioGRID" id="121013">
    <property type="interactions" value="220"/>
</dbReference>
<dbReference type="ComplexPortal" id="CPX-577">
    <property type="entry name" value="Mitochondrial respiratory chain complex I"/>
</dbReference>
<dbReference type="CORUM" id="Q9UI09"/>
<dbReference type="FunCoup" id="Q9UI09">
    <property type="interactions" value="2240"/>
</dbReference>
<dbReference type="IntAct" id="Q9UI09">
    <property type="interactions" value="95"/>
</dbReference>
<dbReference type="MINT" id="Q9UI09"/>
<dbReference type="STRING" id="9606.ENSP00000330737"/>
<dbReference type="BindingDB" id="Q9UI09"/>
<dbReference type="ChEMBL" id="CHEMBL2363065"/>
<dbReference type="DrugBank" id="DB00157">
    <property type="generic name" value="NADH"/>
</dbReference>
<dbReference type="DrugCentral" id="Q9UI09"/>
<dbReference type="GlyGen" id="Q9UI09">
    <property type="glycosylation" value="1 site, 1 O-linked glycan (1 site)"/>
</dbReference>
<dbReference type="iPTMnet" id="Q9UI09"/>
<dbReference type="PhosphoSitePlus" id="Q9UI09"/>
<dbReference type="BioMuta" id="NDUFA12"/>
<dbReference type="DMDM" id="12229870"/>
<dbReference type="jPOST" id="Q9UI09"/>
<dbReference type="MassIVE" id="Q9UI09"/>
<dbReference type="PaxDb" id="9606-ENSP00000330737"/>
<dbReference type="PeptideAtlas" id="Q9UI09"/>
<dbReference type="ProteomicsDB" id="28348"/>
<dbReference type="ProteomicsDB" id="84447">
    <molecule id="Q9UI09-1"/>
</dbReference>
<dbReference type="Pumba" id="Q9UI09"/>
<dbReference type="TopDownProteomics" id="Q9UI09-1">
    <molecule id="Q9UI09-1"/>
</dbReference>
<dbReference type="Antibodypedia" id="30095">
    <property type="antibodies" value="166 antibodies from 28 providers"/>
</dbReference>
<dbReference type="DNASU" id="55967"/>
<dbReference type="Ensembl" id="ENST00000327772.7">
    <molecule id="Q9UI09-1"/>
    <property type="protein sequence ID" value="ENSP00000330737.2"/>
    <property type="gene ID" value="ENSG00000184752.14"/>
</dbReference>
<dbReference type="Ensembl" id="ENST00000547986.5">
    <molecule id="Q9UI09-2"/>
    <property type="protein sequence ID" value="ENSP00000450130.1"/>
    <property type="gene ID" value="ENSG00000184752.14"/>
</dbReference>
<dbReference type="GeneID" id="55967"/>
<dbReference type="KEGG" id="hsa:55967"/>
<dbReference type="MANE-Select" id="ENST00000327772.7">
    <property type="protein sequence ID" value="ENSP00000330737.2"/>
    <property type="RefSeq nucleotide sequence ID" value="NM_018838.5"/>
    <property type="RefSeq protein sequence ID" value="NP_061326.1"/>
</dbReference>
<dbReference type="UCSC" id="uc001tdl.5">
    <molecule id="Q9UI09-1"/>
    <property type="organism name" value="human"/>
</dbReference>
<dbReference type="AGR" id="HGNC:23987"/>
<dbReference type="CTD" id="55967"/>
<dbReference type="DisGeNET" id="55967"/>
<dbReference type="GeneCards" id="NDUFA12"/>
<dbReference type="HGNC" id="HGNC:23987">
    <property type="gene designation" value="NDUFA12"/>
</dbReference>
<dbReference type="HPA" id="ENSG00000184752">
    <property type="expression patterns" value="Tissue enhanced (skeletal muscle, tongue)"/>
</dbReference>
<dbReference type="MalaCards" id="NDUFA12"/>
<dbReference type="MIM" id="614530">
    <property type="type" value="gene"/>
</dbReference>
<dbReference type="MIM" id="618244">
    <property type="type" value="phenotype"/>
</dbReference>
<dbReference type="neXtProt" id="NX_Q9UI09"/>
<dbReference type="OpenTargets" id="ENSG00000184752"/>
<dbReference type="PharmGKB" id="PA142671269"/>
<dbReference type="VEuPathDB" id="HostDB:ENSG00000184752"/>
<dbReference type="eggNOG" id="KOG3382">
    <property type="taxonomic scope" value="Eukaryota"/>
</dbReference>
<dbReference type="GeneTree" id="ENSGT00390000005848"/>
<dbReference type="HOGENOM" id="CLU_110455_1_0_1"/>
<dbReference type="InParanoid" id="Q9UI09"/>
<dbReference type="OMA" id="VIYTAEM"/>
<dbReference type="OrthoDB" id="274641at2759"/>
<dbReference type="PAN-GO" id="Q9UI09">
    <property type="GO annotations" value="2 GO annotations based on evolutionary models"/>
</dbReference>
<dbReference type="PhylomeDB" id="Q9UI09"/>
<dbReference type="TreeFam" id="TF106106"/>
<dbReference type="BioCyc" id="MetaCyc:HS03370-MONOMER"/>
<dbReference type="PathwayCommons" id="Q9UI09"/>
<dbReference type="Reactome" id="R-HSA-611105">
    <property type="pathway name" value="Respiratory electron transport"/>
</dbReference>
<dbReference type="Reactome" id="R-HSA-6799198">
    <property type="pathway name" value="Complex I biogenesis"/>
</dbReference>
<dbReference type="SignaLink" id="Q9UI09"/>
<dbReference type="SIGNOR" id="Q9UI09"/>
<dbReference type="BioGRID-ORCS" id="55967">
    <property type="hits" value="14 hits in 1157 CRISPR screens"/>
</dbReference>
<dbReference type="CD-CODE" id="FB4E32DD">
    <property type="entry name" value="Presynaptic clusters and postsynaptic densities"/>
</dbReference>
<dbReference type="ChiTaRS" id="NDUFA12">
    <property type="organism name" value="human"/>
</dbReference>
<dbReference type="GenomeRNAi" id="55967"/>
<dbReference type="Pharos" id="Q9UI09">
    <property type="development level" value="Tclin"/>
</dbReference>
<dbReference type="PRO" id="PR:Q9UI09"/>
<dbReference type="Proteomes" id="UP000005640">
    <property type="component" value="Chromosome 12"/>
</dbReference>
<dbReference type="RNAct" id="Q9UI09">
    <property type="molecule type" value="protein"/>
</dbReference>
<dbReference type="Bgee" id="ENSG00000184752">
    <property type="expression patterns" value="Expressed in left ventricle myocardium and 190 other cell types or tissues"/>
</dbReference>
<dbReference type="ExpressionAtlas" id="Q9UI09">
    <property type="expression patterns" value="baseline and differential"/>
</dbReference>
<dbReference type="GO" id="GO:0005743">
    <property type="term" value="C:mitochondrial inner membrane"/>
    <property type="evidence" value="ECO:0000314"/>
    <property type="project" value="ComplexPortal"/>
</dbReference>
<dbReference type="GO" id="GO:0005739">
    <property type="term" value="C:mitochondrion"/>
    <property type="evidence" value="ECO:0006056"/>
    <property type="project" value="FlyBase"/>
</dbReference>
<dbReference type="GO" id="GO:0045271">
    <property type="term" value="C:respiratory chain complex I"/>
    <property type="evidence" value="ECO:0000314"/>
    <property type="project" value="UniProtKB"/>
</dbReference>
<dbReference type="GO" id="GO:0008137">
    <property type="term" value="F:NADH dehydrogenase (ubiquinone) activity"/>
    <property type="evidence" value="ECO:0000303"/>
    <property type="project" value="UniProtKB"/>
</dbReference>
<dbReference type="GO" id="GO:0009060">
    <property type="term" value="P:aerobic respiration"/>
    <property type="evidence" value="ECO:0000303"/>
    <property type="project" value="ComplexPortal"/>
</dbReference>
<dbReference type="GO" id="GO:0042775">
    <property type="term" value="P:mitochondrial ATP synthesis coupled electron transport"/>
    <property type="evidence" value="ECO:0000315"/>
    <property type="project" value="CAFA"/>
</dbReference>
<dbReference type="GO" id="GO:0042776">
    <property type="term" value="P:proton motive force-driven mitochondrial ATP synthesis"/>
    <property type="evidence" value="ECO:0000303"/>
    <property type="project" value="ComplexPortal"/>
</dbReference>
<dbReference type="InterPro" id="IPR007763">
    <property type="entry name" value="NDUFA12"/>
</dbReference>
<dbReference type="PANTHER" id="PTHR12910:SF2">
    <property type="entry name" value="NADH DEHYDROGENASE [UBIQUINONE] 1 ALPHA SUBCOMPLEX SUBUNIT 12"/>
    <property type="match status" value="1"/>
</dbReference>
<dbReference type="PANTHER" id="PTHR12910">
    <property type="entry name" value="NADH-UBIQUINONE OXIDOREDUCTASE SUBUNIT B17.2"/>
    <property type="match status" value="1"/>
</dbReference>
<dbReference type="Pfam" id="PF05071">
    <property type="entry name" value="NDUFA12"/>
    <property type="match status" value="1"/>
</dbReference>
<comment type="function">
    <text evidence="5">Accessory subunit of the mitochondrial membrane respiratory chain NADH dehydrogenase (Complex I), that is believed not to be involved in catalysis. Complex I functions in the transfer of electrons from NADH to the respiratory chain. The immediate electron acceptor for the enzyme is believed to be ubiquinone.</text>
</comment>
<comment type="subunit">
    <text evidence="2 5">Complex I is composed of 45 different subunits.</text>
</comment>
<comment type="interaction">
    <interactant intactId="EBI-1246332">
        <id>Q9UI09</id>
    </interactant>
    <interactant intactId="EBI-7950783">
        <id>Q96JP2</id>
        <label>MYO15B</label>
    </interactant>
    <organismsDiffer>false</organismsDiffer>
    <experiments>3</experiments>
</comment>
<comment type="interaction">
    <interactant intactId="EBI-1246332">
        <id>Q9UI09</id>
    </interactant>
    <interactant intactId="EBI-751132">
        <id>Q9H2B2</id>
        <label>SYT4</label>
    </interactant>
    <organismsDiffer>false</organismsDiffer>
    <experiments>3</experiments>
</comment>
<comment type="interaction">
    <interactant intactId="EBI-1246332">
        <id>Q9UI09</id>
    </interactant>
    <interactant intactId="EBI-11603430">
        <id>Q6PL24</id>
        <label>TMED8</label>
    </interactant>
    <organismsDiffer>false</organismsDiffer>
    <experiments>3</experiments>
</comment>
<comment type="subcellular location">
    <subcellularLocation>
        <location evidence="8">Mitochondrion inner membrane</location>
        <topology evidence="1">Peripheral membrane protein</topology>
        <orientation evidence="7">Matrix side</orientation>
    </subcellularLocation>
</comment>
<comment type="alternative products">
    <event type="alternative splicing"/>
    <isoform>
        <id>Q9UI09-1</id>
        <name>1</name>
        <sequence type="displayed"/>
    </isoform>
    <isoform>
        <id>Q9UI09-2</id>
        <name>2</name>
        <sequence type="described" ref="VSP_046948"/>
    </isoform>
</comment>
<comment type="disease" evidence="4">
    <disease id="DI-05419">
        <name>Mitochondrial complex I deficiency, nuclear type 23</name>
        <acronym>MC1DN23</acronym>
        <description>A form of mitochondrial complex I deficiency, the most common biochemical signature of mitochondrial disorders, a group of highly heterogeneous conditions characterized by defective oxidative phosphorylation, which collectively affects 1 in 5-10000 live births. Clinical disorders have variable severity, ranging from lethal neonatal disease to adult-onset neurodegenerative disorders. Phenotypes include macrocephaly with progressive leukodystrophy, non-specific encephalopathy, cardiomyopathy, myopathy, liver disease, Leigh syndrome, Leber hereditary optic neuropathy, and some forms of Parkinson disease. MC1DN23 transmission pattern is consistent with autosomal recessive inheritance.</description>
        <dbReference type="MIM" id="618244"/>
    </disease>
    <text>The disease is caused by variants affecting the gene represented in this entry.</text>
</comment>
<comment type="miscellaneous">
    <text evidence="5">In NDUFA12-knockout cells, complex I assembly is not affected, probably due to substitution by the NDUFAF2 paralog.</text>
</comment>
<comment type="similarity">
    <text evidence="7">Belongs to the complex I NDUFA12 subunit family.</text>
</comment>
<feature type="chain" id="PRO_0000118845" description="NADH dehydrogenase [ubiquinone] 1 alpha subcomplex subunit 12">
    <location>
        <begin position="1"/>
        <end position="145"/>
    </location>
</feature>
<feature type="modified residue" description="N-acetylmethionine" evidence="9 10">
    <location>
        <position position="1"/>
    </location>
</feature>
<feature type="splice variant" id="VSP_046948" description="In isoform 2." evidence="7">
    <original>RHRWVVYTTEMNGKNTFWDVDGSMVPPEWHRWLHSMTDDPPTTKPLTARKFIWTNHKFNVTGTPEQYVPYSTTRKKIQEWIPPSTPYK</original>
    <variation>IVGFTV</variation>
    <location>
        <begin position="58"/>
        <end position="145"/>
    </location>
</feature>
<feature type="sequence variant" id="VAR_081459" description="In MC1DN23." evidence="4">
    <location>
        <begin position="60"/>
        <end position="145"/>
    </location>
</feature>
<feature type="sequence variant" id="VAR_060682" description="In dbSNP:rs17850017." evidence="3 6">
    <original>T</original>
    <variation>A</variation>
    <location>
        <position position="104"/>
    </location>
</feature>
<feature type="helix" evidence="11">
    <location>
        <begin position="3"/>
        <end position="15"/>
    </location>
</feature>
<feature type="helix" evidence="11">
    <location>
        <begin position="21"/>
        <end position="29"/>
    </location>
</feature>
<feature type="strand" evidence="11">
    <location>
        <begin position="52"/>
        <end position="54"/>
    </location>
</feature>
<feature type="strand" evidence="11">
    <location>
        <begin position="58"/>
        <end position="60"/>
    </location>
</feature>
<feature type="helix" evidence="11">
    <location>
        <begin position="68"/>
        <end position="70"/>
    </location>
</feature>
<feature type="strand" evidence="11">
    <location>
        <begin position="74"/>
        <end position="76"/>
    </location>
</feature>
<feature type="helix" evidence="11">
    <location>
        <begin position="84"/>
        <end position="90"/>
    </location>
</feature>
<feature type="turn" evidence="11">
    <location>
        <begin position="98"/>
        <end position="100"/>
    </location>
</feature>
<feature type="strand" evidence="11">
    <location>
        <begin position="118"/>
        <end position="121"/>
    </location>
</feature>
<sequence>MELVQVLKRGLQQITGHGGLRGYLRVFFRTNDAKVGTLVGEDKYGNKYYEDNKQFFGRHRWVVYTTEMNGKNTFWDVDGSMVPPEWHRWLHSMTDDPPTTKPLTARKFIWTNHKFNVTGTPEQYVPYSTTRKKIQEWIPPSTPYK</sequence>
<organism>
    <name type="scientific">Homo sapiens</name>
    <name type="common">Human</name>
    <dbReference type="NCBI Taxonomy" id="9606"/>
    <lineage>
        <taxon>Eukaryota</taxon>
        <taxon>Metazoa</taxon>
        <taxon>Chordata</taxon>
        <taxon>Craniata</taxon>
        <taxon>Vertebrata</taxon>
        <taxon>Euteleostomi</taxon>
        <taxon>Mammalia</taxon>
        <taxon>Eutheria</taxon>
        <taxon>Euarchontoglires</taxon>
        <taxon>Primates</taxon>
        <taxon>Haplorrhini</taxon>
        <taxon>Catarrhini</taxon>
        <taxon>Hominidae</taxon>
        <taxon>Homo</taxon>
    </lineage>
</organism>
<reference key="1">
    <citation type="journal article" date="2000" name="Hum. Genet.">
        <title>Characterization of the human complex I NDUFB7 and 17.2-kDa cDNAs and mutational analysis of 19 genes of the HP fraction in complex I-deficient-patients.</title>
        <authorList>
            <person name="Triepels R."/>
            <person name="Smeitink J."/>
            <person name="Loeffen J."/>
            <person name="Smeets R."/>
            <person name="Trijbels F."/>
            <person name="van den Heuvel L."/>
        </authorList>
    </citation>
    <scope>NUCLEOTIDE SEQUENCE [MRNA]</scope>
</reference>
<reference key="2">
    <citation type="journal article" date="2000" name="Proc. Natl. Acad. Sci. U.S.A.">
        <title>Gene expression profiling in the human hypothalamus-pituitary-adrenal axis and full-length cDNA cloning.</title>
        <authorList>
            <person name="Hu R.-M."/>
            <person name="Han Z.-G."/>
            <person name="Song H.-D."/>
            <person name="Peng Y.-D."/>
            <person name="Huang Q.-H."/>
            <person name="Ren S.-X."/>
            <person name="Gu Y.-J."/>
            <person name="Huang C.-H."/>
            <person name="Li Y.-B."/>
            <person name="Jiang C.-L."/>
            <person name="Fu G."/>
            <person name="Zhang Q.-H."/>
            <person name="Gu B.-W."/>
            <person name="Dai M."/>
            <person name="Mao Y.-F."/>
            <person name="Gao G.-F."/>
            <person name="Rong R."/>
            <person name="Ye M."/>
            <person name="Zhou J."/>
            <person name="Xu S.-H."/>
            <person name="Gu J."/>
            <person name="Shi J.-X."/>
            <person name="Jin W.-R."/>
            <person name="Zhang C.-K."/>
            <person name="Wu T.-M."/>
            <person name="Huang G.-Y."/>
            <person name="Chen Z."/>
            <person name="Chen M.-D."/>
            <person name="Chen J.-L."/>
        </authorList>
    </citation>
    <scope>NUCLEOTIDE SEQUENCE [LARGE SCALE MRNA]</scope>
    <source>
        <tissue>Adrenal gland</tissue>
    </source>
</reference>
<reference key="3">
    <citation type="submission" date="2003-05" db="EMBL/GenBank/DDBJ databases">
        <title>Cloning of human full-length CDSs in BD Creator(TM) system donor vector.</title>
        <authorList>
            <person name="Kalnine N."/>
            <person name="Chen X."/>
            <person name="Rolfs A."/>
            <person name="Halleck A."/>
            <person name="Hines L."/>
            <person name="Eisenstein S."/>
            <person name="Koundinya M."/>
            <person name="Raphael J."/>
            <person name="Moreira D."/>
            <person name="Kelley T."/>
            <person name="LaBaer J."/>
            <person name="Lin Y."/>
            <person name="Phelan M."/>
            <person name="Farmer A."/>
        </authorList>
    </citation>
    <scope>NUCLEOTIDE SEQUENCE [LARGE SCALE MRNA]</scope>
    <scope>VARIANT ALA-104</scope>
</reference>
<reference key="4">
    <citation type="journal article" date="2006" name="Nature">
        <title>The finished DNA sequence of human chromosome 12.</title>
        <authorList>
            <person name="Scherer S.E."/>
            <person name="Muzny D.M."/>
            <person name="Buhay C.J."/>
            <person name="Chen R."/>
            <person name="Cree A."/>
            <person name="Ding Y."/>
            <person name="Dugan-Rocha S."/>
            <person name="Gill R."/>
            <person name="Gunaratne P."/>
            <person name="Harris R.A."/>
            <person name="Hawes A.C."/>
            <person name="Hernandez J."/>
            <person name="Hodgson A.V."/>
            <person name="Hume J."/>
            <person name="Jackson A."/>
            <person name="Khan Z.M."/>
            <person name="Kovar-Smith C."/>
            <person name="Lewis L.R."/>
            <person name="Lozado R.J."/>
            <person name="Metzker M.L."/>
            <person name="Milosavljevic A."/>
            <person name="Miner G.R."/>
            <person name="Montgomery K.T."/>
            <person name="Morgan M.B."/>
            <person name="Nazareth L.V."/>
            <person name="Scott G."/>
            <person name="Sodergren E."/>
            <person name="Song X.-Z."/>
            <person name="Steffen D."/>
            <person name="Lovering R.C."/>
            <person name="Wheeler D.A."/>
            <person name="Worley K.C."/>
            <person name="Yuan Y."/>
            <person name="Zhang Z."/>
            <person name="Adams C.Q."/>
            <person name="Ansari-Lari M.A."/>
            <person name="Ayele M."/>
            <person name="Brown M.J."/>
            <person name="Chen G."/>
            <person name="Chen Z."/>
            <person name="Clerc-Blankenburg K.P."/>
            <person name="Davis C."/>
            <person name="Delgado O."/>
            <person name="Dinh H.H."/>
            <person name="Draper H."/>
            <person name="Gonzalez-Garay M.L."/>
            <person name="Havlak P."/>
            <person name="Jackson L.R."/>
            <person name="Jacob L.S."/>
            <person name="Kelly S.H."/>
            <person name="Li L."/>
            <person name="Li Z."/>
            <person name="Liu J."/>
            <person name="Liu W."/>
            <person name="Lu J."/>
            <person name="Maheshwari M."/>
            <person name="Nguyen B.-V."/>
            <person name="Okwuonu G.O."/>
            <person name="Pasternak S."/>
            <person name="Perez L.M."/>
            <person name="Plopper F.J.H."/>
            <person name="Santibanez J."/>
            <person name="Shen H."/>
            <person name="Tabor P.E."/>
            <person name="Verduzco D."/>
            <person name="Waldron L."/>
            <person name="Wang Q."/>
            <person name="Williams G.A."/>
            <person name="Zhang J."/>
            <person name="Zhou J."/>
            <person name="Allen C.C."/>
            <person name="Amin A.G."/>
            <person name="Anyalebechi V."/>
            <person name="Bailey M."/>
            <person name="Barbaria J.A."/>
            <person name="Bimage K.E."/>
            <person name="Bryant N.P."/>
            <person name="Burch P.E."/>
            <person name="Burkett C.E."/>
            <person name="Burrell K.L."/>
            <person name="Calderon E."/>
            <person name="Cardenas V."/>
            <person name="Carter K."/>
            <person name="Casias K."/>
            <person name="Cavazos I."/>
            <person name="Cavazos S.R."/>
            <person name="Ceasar H."/>
            <person name="Chacko J."/>
            <person name="Chan S.N."/>
            <person name="Chavez D."/>
            <person name="Christopoulos C."/>
            <person name="Chu J."/>
            <person name="Cockrell R."/>
            <person name="Cox C.D."/>
            <person name="Dang M."/>
            <person name="Dathorne S.R."/>
            <person name="David R."/>
            <person name="Davis C.M."/>
            <person name="Davy-Carroll L."/>
            <person name="Deshazo D.R."/>
            <person name="Donlin J.E."/>
            <person name="D'Souza L."/>
            <person name="Eaves K.A."/>
            <person name="Egan A."/>
            <person name="Emery-Cohen A.J."/>
            <person name="Escotto M."/>
            <person name="Flagg N."/>
            <person name="Forbes L.D."/>
            <person name="Gabisi A.M."/>
            <person name="Garza M."/>
            <person name="Hamilton C."/>
            <person name="Henderson N."/>
            <person name="Hernandez O."/>
            <person name="Hines S."/>
            <person name="Hogues M.E."/>
            <person name="Huang M."/>
            <person name="Idlebird D.G."/>
            <person name="Johnson R."/>
            <person name="Jolivet A."/>
            <person name="Jones S."/>
            <person name="Kagan R."/>
            <person name="King L.M."/>
            <person name="Leal B."/>
            <person name="Lebow H."/>
            <person name="Lee S."/>
            <person name="LeVan J.M."/>
            <person name="Lewis L.C."/>
            <person name="London P."/>
            <person name="Lorensuhewa L.M."/>
            <person name="Loulseged H."/>
            <person name="Lovett D.A."/>
            <person name="Lucier A."/>
            <person name="Lucier R.L."/>
            <person name="Ma J."/>
            <person name="Madu R.C."/>
            <person name="Mapua P."/>
            <person name="Martindale A.D."/>
            <person name="Martinez E."/>
            <person name="Massey E."/>
            <person name="Mawhiney S."/>
            <person name="Meador M.G."/>
            <person name="Mendez S."/>
            <person name="Mercado C."/>
            <person name="Mercado I.C."/>
            <person name="Merritt C.E."/>
            <person name="Miner Z.L."/>
            <person name="Minja E."/>
            <person name="Mitchell T."/>
            <person name="Mohabbat F."/>
            <person name="Mohabbat K."/>
            <person name="Montgomery B."/>
            <person name="Moore N."/>
            <person name="Morris S."/>
            <person name="Munidasa M."/>
            <person name="Ngo R.N."/>
            <person name="Nguyen N.B."/>
            <person name="Nickerson E."/>
            <person name="Nwaokelemeh O.O."/>
            <person name="Nwokenkwo S."/>
            <person name="Obregon M."/>
            <person name="Oguh M."/>
            <person name="Oragunye N."/>
            <person name="Oviedo R.J."/>
            <person name="Parish B.J."/>
            <person name="Parker D.N."/>
            <person name="Parrish J."/>
            <person name="Parks K.L."/>
            <person name="Paul H.A."/>
            <person name="Payton B.A."/>
            <person name="Perez A."/>
            <person name="Perrin W."/>
            <person name="Pickens A."/>
            <person name="Primus E.L."/>
            <person name="Pu L.-L."/>
            <person name="Puazo M."/>
            <person name="Quiles M.M."/>
            <person name="Quiroz J.B."/>
            <person name="Rabata D."/>
            <person name="Reeves K."/>
            <person name="Ruiz S.J."/>
            <person name="Shao H."/>
            <person name="Sisson I."/>
            <person name="Sonaike T."/>
            <person name="Sorelle R.P."/>
            <person name="Sutton A.E."/>
            <person name="Svatek A.F."/>
            <person name="Svetz L.A."/>
            <person name="Tamerisa K.S."/>
            <person name="Taylor T.R."/>
            <person name="Teague B."/>
            <person name="Thomas N."/>
            <person name="Thorn R.D."/>
            <person name="Trejos Z.Y."/>
            <person name="Trevino B.K."/>
            <person name="Ukegbu O.N."/>
            <person name="Urban J.B."/>
            <person name="Vasquez L.I."/>
            <person name="Vera V.A."/>
            <person name="Villasana D.M."/>
            <person name="Wang L."/>
            <person name="Ward-Moore S."/>
            <person name="Warren J.T."/>
            <person name="Wei X."/>
            <person name="White F."/>
            <person name="Williamson A.L."/>
            <person name="Wleczyk R."/>
            <person name="Wooden H.S."/>
            <person name="Wooden S.H."/>
            <person name="Yen J."/>
            <person name="Yoon L."/>
            <person name="Yoon V."/>
            <person name="Zorrilla S.E."/>
            <person name="Nelson D."/>
            <person name="Kucherlapati R."/>
            <person name="Weinstock G."/>
            <person name="Gibbs R.A."/>
        </authorList>
    </citation>
    <scope>NUCLEOTIDE SEQUENCE [LARGE SCALE GENOMIC DNA]</scope>
</reference>
<reference key="5">
    <citation type="journal article" date="2004" name="Genome Res.">
        <title>The status, quality, and expansion of the NIH full-length cDNA project: the Mammalian Gene Collection (MGC).</title>
        <authorList>
            <consortium name="The MGC Project Team"/>
        </authorList>
    </citation>
    <scope>NUCLEOTIDE SEQUENCE [LARGE SCALE MRNA]</scope>
    <scope>VARIANT ALA-104</scope>
    <source>
        <tissue>Kidney</tissue>
    </source>
</reference>
<reference key="6">
    <citation type="journal article" date="2003" name="J. Biol. Chem.">
        <title>The subunit composition of the human NADH dehydrogenase obtained by rapid one-step immunopurification.</title>
        <authorList>
            <person name="Murray J."/>
            <person name="Zhang B."/>
            <person name="Taylor S.W."/>
            <person name="Oglesbee D."/>
            <person name="Fahy E."/>
            <person name="Marusich M.F."/>
            <person name="Ghosh S.S."/>
            <person name="Capaldi R.A."/>
        </authorList>
    </citation>
    <scope>IDENTIFICATION IN THE NADH-UBIQUINONE OXIDOREDUCTASE COMPLEX</scope>
    <scope>IDENTIFICATION BY MASS SPECTROMETRY</scope>
</reference>
<reference key="7">
    <citation type="journal article" date="2011" name="BMC Syst. Biol.">
        <title>Initial characterization of the human central proteome.</title>
        <authorList>
            <person name="Burkard T.R."/>
            <person name="Planyavsky M."/>
            <person name="Kaupe I."/>
            <person name="Breitwieser F.P."/>
            <person name="Buerckstuemmer T."/>
            <person name="Bennett K.L."/>
            <person name="Superti-Furga G."/>
            <person name="Colinge J."/>
        </authorList>
    </citation>
    <scope>IDENTIFICATION BY MASS SPECTROMETRY [LARGE SCALE ANALYSIS]</scope>
</reference>
<reference key="8">
    <citation type="journal article" date="2011" name="J. Med. Genet.">
        <title>Respiratory chain complex I deficiency due to NDUFA12 mutations as a new cause of Leigh syndrome.</title>
        <authorList>
            <person name="Ostergaard E."/>
            <person name="Rodenburg R.J."/>
            <person name="van den Brand M."/>
            <person name="Thomsen L.L."/>
            <person name="Duno M."/>
            <person name="Batbayli M."/>
            <person name="Wibrand F."/>
            <person name="Nijtmans L."/>
        </authorList>
    </citation>
    <scope>INVOLVEMENT IN MC1DN23</scope>
    <scope>VARIANT MC1DN23 60-ARG--LYS-145 DEL</scope>
</reference>
<reference key="9">
    <citation type="journal article" date="2012" name="Proc. Natl. Acad. Sci. U.S.A.">
        <title>N-terminal acetylome analyses and functional insights of the N-terminal acetyltransferase NatB.</title>
        <authorList>
            <person name="Van Damme P."/>
            <person name="Lasa M."/>
            <person name="Polevoda B."/>
            <person name="Gazquez C."/>
            <person name="Elosegui-Artola A."/>
            <person name="Kim D.S."/>
            <person name="De Juan-Pardo E."/>
            <person name="Demeyer K."/>
            <person name="Hole K."/>
            <person name="Larrea E."/>
            <person name="Timmerman E."/>
            <person name="Prieto J."/>
            <person name="Arnesen T."/>
            <person name="Sherman F."/>
            <person name="Gevaert K."/>
            <person name="Aldabe R."/>
        </authorList>
    </citation>
    <scope>ACETYLATION [LARGE SCALE ANALYSIS] AT MET-1</scope>
    <scope>IDENTIFICATION BY MASS SPECTROMETRY [LARGE SCALE ANALYSIS]</scope>
</reference>
<reference key="10">
    <citation type="journal article" date="2014" name="J. Proteomics">
        <title>An enzyme assisted RP-RPLC approach for in-depth analysis of human liver phosphoproteome.</title>
        <authorList>
            <person name="Bian Y."/>
            <person name="Song C."/>
            <person name="Cheng K."/>
            <person name="Dong M."/>
            <person name="Wang F."/>
            <person name="Huang J."/>
            <person name="Sun D."/>
            <person name="Wang L."/>
            <person name="Ye M."/>
            <person name="Zou H."/>
        </authorList>
    </citation>
    <scope>IDENTIFICATION BY MASS SPECTROMETRY [LARGE SCALE ANALYSIS]</scope>
    <source>
        <tissue>Liver</tissue>
    </source>
</reference>
<reference key="11">
    <citation type="journal article" date="2015" name="Proteomics">
        <title>N-terminome analysis of the human mitochondrial proteome.</title>
        <authorList>
            <person name="Vaca Jacome A.S."/>
            <person name="Rabilloud T."/>
            <person name="Schaeffer-Reiss C."/>
            <person name="Rompais M."/>
            <person name="Ayoub D."/>
            <person name="Lane L."/>
            <person name="Bairoch A."/>
            <person name="Van Dorsselaer A."/>
            <person name="Carapito C."/>
        </authorList>
    </citation>
    <scope>ACETYLATION [LARGE SCALE ANALYSIS] AT MET-1</scope>
    <scope>IDENTIFICATION BY MASS SPECTROMETRY [LARGE SCALE ANALYSIS]</scope>
</reference>
<reference key="12">
    <citation type="journal article" date="2016" name="Nature">
        <title>Accessory subunits are integral for assembly and function of human mitochondrial complex I.</title>
        <authorList>
            <person name="Stroud D.A."/>
            <person name="Surgenor E.E."/>
            <person name="Formosa L.E."/>
            <person name="Reljic B."/>
            <person name="Frazier A.E."/>
            <person name="Dibley M.G."/>
            <person name="Osellame L.D."/>
            <person name="Stait T."/>
            <person name="Beilharz T.H."/>
            <person name="Thorburn D.R."/>
            <person name="Salim A."/>
            <person name="Ryan M.T."/>
        </authorList>
    </citation>
    <scope>FUNCTION</scope>
    <scope>IDENTIFICATION IN THE NADH-UBIQUINONE OXIDOREDUCTASE COMPLEX</scope>
</reference>
<protein>
    <recommendedName>
        <fullName>NADH dehydrogenase [ubiquinone] 1 alpha subcomplex subunit 12</fullName>
    </recommendedName>
    <alternativeName>
        <fullName>13 kDa differentiation-associated protein</fullName>
    </alternativeName>
    <alternativeName>
        <fullName>Complex I-B17.2</fullName>
        <shortName>CI-B17.2</shortName>
        <shortName>CIB17.2</shortName>
    </alternativeName>
    <alternativeName>
        <fullName>NADH-ubiquinone oxidoreductase subunit B17.2</fullName>
    </alternativeName>
</protein>
<name>NDUAC_HUMAN</name>
<accession>Q9UI09</accession>
<accession>F8VQS7</accession>
<accession>Q53XX0</accession>
<accession>Q9BRV6</accession>
<proteinExistence type="evidence at protein level"/>